<proteinExistence type="evidence at protein level"/>
<keyword id="KW-0067">ATP-binding</keyword>
<keyword id="KW-0521">NADP</keyword>
<keyword id="KW-0547">Nucleotide-binding</keyword>
<keyword id="KW-0560">Oxidoreductase</keyword>
<keyword id="KW-0596">Phosphopantetheine</keyword>
<keyword id="KW-0597">Phosphoprotein</keyword>
<protein>
    <recommendedName>
        <fullName evidence="5">Adenylate-forming reductase Nps9</fullName>
        <ecNumber evidence="4">1.2.1.-</ecNumber>
    </recommendedName>
    <alternativeName>
        <fullName evidence="5">Nonribosomal peptide synthase-like enzyme 9</fullName>
        <shortName evidence="5">NRPS-like</shortName>
    </alternativeName>
    <alternativeName>
        <fullName evidence="5">Threonine reductase</fullName>
    </alternativeName>
</protein>
<reference key="1">
    <citation type="journal article" date="2018" name="Fungal Genet. Biol.">
        <title>Multi-genome analysis identifies functional and phylogenetic diversity of basidiomycete adenylate-forming reductases.</title>
        <authorList>
            <person name="Brandenburger E."/>
            <person name="Braga D."/>
            <person name="Kombrink A."/>
            <person name="Lackner G."/>
            <person name="Gressler J."/>
            <person name="Kuenzler M."/>
            <person name="Hoffmeister D."/>
        </authorList>
    </citation>
    <scope>NUCLEOTIDE SEQUENCE [MRNA]</scope>
    <scope>FUNCTION</scope>
    <scope>CATALYTIC ACTIVITY</scope>
    <source>
        <strain>S7</strain>
    </source>
</reference>
<reference key="2">
    <citation type="journal article" date="2011" name="Science">
        <title>The plant cell wall-decomposing machinery underlies the functional diversity of forest fungi.</title>
        <authorList>
            <person name="Eastwood D.C."/>
            <person name="Floudas D."/>
            <person name="Binder M."/>
            <person name="Majcherczyk A."/>
            <person name="Schneider P."/>
            <person name="Aerts A."/>
            <person name="Asiegbu F.O."/>
            <person name="Baker S.E."/>
            <person name="Barry K."/>
            <person name="Bendiksby M."/>
            <person name="Blumentritt M."/>
            <person name="Coutinho P.M."/>
            <person name="Cullen D."/>
            <person name="de Vries R.P."/>
            <person name="Gathman A."/>
            <person name="Goodell B."/>
            <person name="Henrissat B."/>
            <person name="Ihrmark K."/>
            <person name="Kauserud H."/>
            <person name="Kohler A."/>
            <person name="LaButti K."/>
            <person name="Lapidus A."/>
            <person name="Lavin J.L."/>
            <person name="Lee Y.-H."/>
            <person name="Lindquist E."/>
            <person name="Lilly W."/>
            <person name="Lucas S."/>
            <person name="Morin E."/>
            <person name="Murat C."/>
            <person name="Oguiza J.A."/>
            <person name="Park J."/>
            <person name="Pisabarro A.G."/>
            <person name="Riley R."/>
            <person name="Rosling A."/>
            <person name="Salamov A."/>
            <person name="Schmidt O."/>
            <person name="Schmutz J."/>
            <person name="Skrede I."/>
            <person name="Stenlid J."/>
            <person name="Wiebenga A."/>
            <person name="Xie X."/>
            <person name="Kuees U."/>
            <person name="Hibbett D.S."/>
            <person name="Hoffmeister D."/>
            <person name="Hoegberg N."/>
            <person name="Martin F."/>
            <person name="Grigoriev I.V."/>
            <person name="Watkinson S.C."/>
        </authorList>
    </citation>
    <scope>NUCLEOTIDE SEQUENCE [LARGE SCALE GENOMIC DNA]</scope>
    <source>
        <strain>S7.9</strain>
    </source>
</reference>
<gene>
    <name evidence="5" type="primary">nps9</name>
    <name type="ORF">SERLADRAFT_450936</name>
</gene>
<organism>
    <name type="scientific">Serpula lacrymans var. lacrymans (strain S7.9)</name>
    <name type="common">Dry rot fungus</name>
    <dbReference type="NCBI Taxonomy" id="578457"/>
    <lineage>
        <taxon>Eukaryota</taxon>
        <taxon>Fungi</taxon>
        <taxon>Dikarya</taxon>
        <taxon>Basidiomycota</taxon>
        <taxon>Agaricomycotina</taxon>
        <taxon>Agaricomycetes</taxon>
        <taxon>Agaricomycetidae</taxon>
        <taxon>Boletales</taxon>
        <taxon>Coniophorineae</taxon>
        <taxon>Serpulaceae</taxon>
        <taxon>Serpula</taxon>
    </lineage>
</organism>
<feature type="chain" id="PRO_0000442638" description="Adenylate-forming reductase Nps9">
    <location>
        <begin position="1"/>
        <end position="1096"/>
    </location>
</feature>
<feature type="domain" description="Carrier" evidence="3 7">
    <location>
        <begin position="569"/>
        <end position="656"/>
    </location>
</feature>
<feature type="region of interest" description="Adenylation (A) domain" evidence="2 7">
    <location>
        <begin position="39"/>
        <end position="352"/>
    </location>
</feature>
<feature type="region of interest" description="Reductase (R) domain" evidence="2 7">
    <location>
        <begin position="716"/>
        <end position="952"/>
    </location>
</feature>
<feature type="binding site" evidence="1">
    <location>
        <position position="236"/>
    </location>
    <ligand>
        <name>AMP</name>
        <dbReference type="ChEBI" id="CHEBI:456215"/>
    </ligand>
</feature>
<feature type="binding site" evidence="1">
    <location>
        <begin position="339"/>
        <end position="340"/>
    </location>
    <ligand>
        <name>AMP</name>
        <dbReference type="ChEBI" id="CHEBI:456215"/>
    </ligand>
</feature>
<feature type="binding site" evidence="1">
    <location>
        <position position="344"/>
    </location>
    <ligand>
        <name>AMP</name>
        <dbReference type="ChEBI" id="CHEBI:456215"/>
    </ligand>
</feature>
<feature type="binding site" evidence="1">
    <location>
        <begin position="425"/>
        <end position="428"/>
    </location>
    <ligand>
        <name>AMP</name>
        <dbReference type="ChEBI" id="CHEBI:456215"/>
    </ligand>
</feature>
<feature type="binding site" evidence="1">
    <location>
        <begin position="720"/>
        <end position="723"/>
    </location>
    <ligand>
        <name>NADP(+)</name>
        <dbReference type="ChEBI" id="CHEBI:58349"/>
    </ligand>
</feature>
<feature type="binding site" evidence="1">
    <location>
        <begin position="807"/>
        <end position="809"/>
    </location>
    <ligand>
        <name>NADP(+)</name>
        <dbReference type="ChEBI" id="CHEBI:58349"/>
    </ligand>
</feature>
<feature type="binding site" evidence="1">
    <location>
        <position position="880"/>
    </location>
    <ligand>
        <name>NADP(+)</name>
        <dbReference type="ChEBI" id="CHEBI:58349"/>
    </ligand>
</feature>
<feature type="binding site" evidence="1">
    <location>
        <position position="884"/>
    </location>
    <ligand>
        <name>NADP(+)</name>
        <dbReference type="ChEBI" id="CHEBI:58349"/>
    </ligand>
</feature>
<feature type="modified residue" description="O-(pantetheine 4'-phosphoryl)serine" evidence="3">
    <location>
        <position position="605"/>
    </location>
</feature>
<name>NPS9_SERL9</name>
<comment type="function">
    <text evidence="4">Adenylate-forming reductase, a natural product biosynthesis enzyme that resembles non-ribosomal peptide synthetases, yet serves to modify one substrate, rather than to condense two or more building blocks. The A-domain preferentially accepts L-threonine as substrate. The natural product of the enzyme is not yet known.</text>
</comment>
<comment type="domain">
    <text evidence="7">Contains three distinct domains: an adenylation (A) domain that activates the substrate amino acid which is subsequently covalently linked as a thioester (aminoacyl-S-PCP) to the 4'-phosphopantetheine prosthetic group of the second domain, the peptidyl carrier protein (PCP) domain, as well as a reductase (R) domain of the short-chain dehydrogenase/reductase (SDR) type.</text>
</comment>
<comment type="similarity">
    <text evidence="6">Belongs to the adenylate-forming reductase family.</text>
</comment>
<comment type="sequence caution" evidence="6">
    <conflict type="erroneous gene model prediction">
        <sequence resource="EMBL-CDS" id="EGO23306"/>
    </conflict>
</comment>
<sequence length="1096" mass="120372">MAPGRVYPPSDKPIALLDLLHFHLVHNPYFPIYIFPNDDDTLTEISFLEFTRAVHRVAHIVRPNRSGQDGEIVALIANTDTLLYHAIGAGMILADIVPFYMSPRNSTPAVASMLQKTACNRIFTIPSVHESLISGLDGLGGPALQFQTIPTLAQVFPNLGKEKSHYPFEPYPEAAITPALDAVFLYLHSSGSTGYPKPIPLTNRCQLHWLQQPGILGYRHYLPDLCLGFAALPPFHSLGNCMQLYTPLISVITVALYAPTSFHDPTAPPVIPTSENILDNLRKTGANCIIVVPSFLEQWAWDEKAVETLKNMSLVLYGGGPLSSKVGDALCAAGVSLAVQYGTTEFGAPTQLPDKVQLENGLWEWMRFGLSVLIRWVHQGDETYECQLLTTEKYQMAVENMSDVKGYATSDLFVKHPTHEGLWKIIGRTDDVLTLASGEKTVPAMMEGIISSSAHVNGVIMFGRGRNQVGVLVEPRSAHVDLADNKAIEEFRNRIWYEVDEANKNAPTFSRIFKEMILITSPDKPMFRVGKGTTSKNATLKAYEEEIDALYRTVEASTKIGNSTAPPSEWTVSTLEHWLNEQATELALGTIVVPNIDLFAQGFDSLSATFLRNRIIGAMRSFPDLQLRAAARRIPHNLVFECPNIKLLADRVAKIAGQPQSQVNEQVKGSALHDAKMEIETMLGKYSAELRRTKKTNGSHVESSASTKAGRTVVLLTGSTGGLGSYLLASLLKNEEVAKVYALNRHSKASRVQQRQTAVFEDRELDVALLKLDKLIFIEADATAERCGLNEQTYDQLRQSVTVIIHSAWRVDFNLPLSSFEPNVRGTFQLVDLALSSTLHSTPRFLFISSVGSAQGWDRSRGAFPEDVQLDASVAVGSGYGASKYIAERLVTSSGLNATSLRLGQIAGGPNGAWTLSDWFPILVKSSLALGKFPNIQAYVSWMPAEKVSAAILDVALAKHAPPPALNIVHPHPVSWPDVLKPVRDAVVAKKRLPKESLPFVRMSEWVALLEMRAEEATESDINAIPAIKLLDWFRALAGVDEDLQRTGRTDVEVGGIVKMVTEKAQSISATLSGLSQIGQADAKLWVDYWIARGLF</sequence>
<dbReference type="EC" id="1.2.1.-" evidence="4"/>
<dbReference type="EMBL" id="KX118590">
    <property type="protein sequence ID" value="ANX99774.1"/>
    <property type="molecule type" value="mRNA"/>
</dbReference>
<dbReference type="EMBL" id="GL945436">
    <property type="protein sequence ID" value="EGO23306.1"/>
    <property type="status" value="ALT_SEQ"/>
    <property type="molecule type" value="Genomic_DNA"/>
</dbReference>
<dbReference type="RefSeq" id="XP_007320546.1">
    <property type="nucleotide sequence ID" value="XM_007320484.1"/>
</dbReference>
<dbReference type="SMR" id="F8P2C8"/>
<dbReference type="GeneID" id="18816692"/>
<dbReference type="KEGG" id="sla:SERLADRAFT_450936"/>
<dbReference type="HOGENOM" id="CLU_002220_1_0_1"/>
<dbReference type="OrthoDB" id="429813at2759"/>
<dbReference type="Proteomes" id="UP000008064">
    <property type="component" value="Unassembled WGS sequence"/>
</dbReference>
<dbReference type="GO" id="GO:0005524">
    <property type="term" value="F:ATP binding"/>
    <property type="evidence" value="ECO:0007669"/>
    <property type="project" value="UniProtKB-KW"/>
</dbReference>
<dbReference type="GO" id="GO:0016491">
    <property type="term" value="F:oxidoreductase activity"/>
    <property type="evidence" value="ECO:0007669"/>
    <property type="project" value="UniProtKB-KW"/>
</dbReference>
<dbReference type="Gene3D" id="3.40.50.12780">
    <property type="entry name" value="N-terminal domain of ligase-like"/>
    <property type="match status" value="1"/>
</dbReference>
<dbReference type="Gene3D" id="3.40.50.720">
    <property type="entry name" value="NAD(P)-binding Rossmann-like Domain"/>
    <property type="match status" value="1"/>
</dbReference>
<dbReference type="InterPro" id="IPR051414">
    <property type="entry name" value="Adenylate-forming_Reductase"/>
</dbReference>
<dbReference type="InterPro" id="IPR020845">
    <property type="entry name" value="AMP-binding_CS"/>
</dbReference>
<dbReference type="InterPro" id="IPR000873">
    <property type="entry name" value="AMP-dep_synth/lig_dom"/>
</dbReference>
<dbReference type="InterPro" id="IPR042099">
    <property type="entry name" value="ANL_N_sf"/>
</dbReference>
<dbReference type="InterPro" id="IPR013120">
    <property type="entry name" value="Far_NAD-bd"/>
</dbReference>
<dbReference type="InterPro" id="IPR036291">
    <property type="entry name" value="NAD(P)-bd_dom_sf"/>
</dbReference>
<dbReference type="PANTHER" id="PTHR43439:SF2">
    <property type="entry name" value="ENZYME, PUTATIVE (JCVI)-RELATED"/>
    <property type="match status" value="1"/>
</dbReference>
<dbReference type="PANTHER" id="PTHR43439">
    <property type="entry name" value="PHENYLACETATE-COENZYME A LIGASE"/>
    <property type="match status" value="1"/>
</dbReference>
<dbReference type="Pfam" id="PF00501">
    <property type="entry name" value="AMP-binding"/>
    <property type="match status" value="1"/>
</dbReference>
<dbReference type="Pfam" id="PF23562">
    <property type="entry name" value="AMP-binding_C_3"/>
    <property type="match status" value="1"/>
</dbReference>
<dbReference type="Pfam" id="PF07993">
    <property type="entry name" value="NAD_binding_4"/>
    <property type="match status" value="1"/>
</dbReference>
<dbReference type="SUPFAM" id="SSF56801">
    <property type="entry name" value="Acetyl-CoA synthetase-like"/>
    <property type="match status" value="1"/>
</dbReference>
<dbReference type="SUPFAM" id="SSF51735">
    <property type="entry name" value="NAD(P)-binding Rossmann-fold domains"/>
    <property type="match status" value="1"/>
</dbReference>
<dbReference type="PROSITE" id="PS00455">
    <property type="entry name" value="AMP_BINDING"/>
    <property type="match status" value="1"/>
</dbReference>
<dbReference type="PROSITE" id="PS50075">
    <property type="entry name" value="CARRIER"/>
    <property type="match status" value="1"/>
</dbReference>
<evidence type="ECO:0000250" key="1">
    <source>
        <dbReference type="UniProtKB" id="Q6RKB1"/>
    </source>
</evidence>
<evidence type="ECO:0000255" key="2"/>
<evidence type="ECO:0000255" key="3">
    <source>
        <dbReference type="PROSITE-ProRule" id="PRU00258"/>
    </source>
</evidence>
<evidence type="ECO:0000269" key="4">
    <source>
    </source>
</evidence>
<evidence type="ECO:0000303" key="5">
    <source>
    </source>
</evidence>
<evidence type="ECO:0000305" key="6"/>
<evidence type="ECO:0000305" key="7">
    <source>
    </source>
</evidence>
<accession>F8P2C8</accession>
<accession>A0A1B1ZGB1</accession>